<sequence>MLRMKLPPKSTHPSEPPPDAEEPEADARPGAKAPPRRRRDCRPPPPPPTGLPRGPPPPPPSPPRGLEPPVASGPTAGAGMPGGGGHAAALREQERVYEWFGLVLGSAQRLEFLCGLLDLCNPLELRFLGSCLEDLARKDYHYLRDSEAKANGLSDPGSLADFREPAVRSRLIVYLALLGSENREAAGRLHRLLPQVDAVLRSLRATRVEGSRGSVEDEPGGDDEQDAEKDGPGPEGGGCAKLGTGGGLGFRAQEELLLLFTMASLHPAFSFHQRVTLREHLERLRSALRVEPEDAEVEPSNFAGSRAQNDSACGDYIQSNETGLVEQAQIPQDGLTVAPHRAQREAVHIEKIMLKGVQRRRADKYWEYTFKVNWSDLSVTTVTKTHQELQEFLLKLPKEFSSESFDKTILKALNQGSLRREERRHPDLEPILRQLFSTSPQAFLQSHKVRSFFRSISSESQHSFNNLQSSLKTSKILEHLKEDSSEASSQEEDVLQHTIIHKKHAGKSPAGNVATSCALLEGLTMQYAEQNGVVDWRNQGCAAIQHSEHCVSSADQLSAEKRSLSSVNKKKGKPQVEKEKIKKTENRLSSRINGIRLSAPQHAHGSTVKDMNLDVGSGHDTCGETSSESYSSPSSPRHDGRESLESEEEKDRDTDSNSEDSGNPSSARFAGHGSVTQTVSVQPPADTVSLGTENGNLLEAPLTSHKYPHIPFMPTLPCVMHNGAQKSEVVIPSPKSADGKAVGVLVPNPVAISTMMESTNAAPVGILGPAASGESEKHLELLASPLPIPSPFLPHSSAPALQLTLQSLKLQPPQGASENCPVNIPQQAATRLSIGSPNTALIPVHNPGAFPGSPVAATDPITKSASQVVGLNQMVPQIEGNTGTVPQPNNVKVVLPAAGLSAAQPPASYTFPGSPLAASVLPTQNSTVLNTATSAQPASTGISPAQSTVPPAVPTHTPGPAPSPSPALTHSTAQSDSTSYISAVGNTNANSTIVPPQPLGPCGSCGRRCSCGTNGNLQLNSYYYPNPMPGPMYRLPSFFTLPSICNGSYLNQAHQSNGNQLPFFLPQTPYANGLVHDPVMGSQASYGMQQMAGFGRLYPVYPAPNVVANTSGSGPKKNGSVSCYNCGVSGHYAQDCKQSSMEANQQGTYRLRYAPPLPPSNDTLDSAD</sequence>
<protein>
    <recommendedName>
        <fullName>Zinc finger CCHC domain-containing protein 2</fullName>
    </recommendedName>
</protein>
<keyword id="KW-0025">Alternative splicing</keyword>
<keyword id="KW-0479">Metal-binding</keyword>
<keyword id="KW-1185">Reference proteome</keyword>
<keyword id="KW-0862">Zinc</keyword>
<keyword id="KW-0863">Zinc-finger</keyword>
<feature type="chain" id="PRO_0000329414" description="Zinc finger CCHC domain-containing protein 2">
    <location>
        <begin position="1"/>
        <end position="1168"/>
    </location>
</feature>
<feature type="zinc finger region" description="CCHC-type" evidence="1">
    <location>
        <begin position="1121"/>
        <end position="1138"/>
    </location>
</feature>
<feature type="region of interest" description="Disordered" evidence="2">
    <location>
        <begin position="1"/>
        <end position="87"/>
    </location>
</feature>
<feature type="region of interest" description="Disordered" evidence="2">
    <location>
        <begin position="209"/>
        <end position="242"/>
    </location>
</feature>
<feature type="region of interest" description="Disordered" evidence="2">
    <location>
        <begin position="561"/>
        <end position="693"/>
    </location>
</feature>
<feature type="region of interest" description="Disordered" evidence="2">
    <location>
        <begin position="932"/>
        <end position="978"/>
    </location>
</feature>
<feature type="compositionally biased region" description="Pro residues" evidence="2">
    <location>
        <begin position="43"/>
        <end position="66"/>
    </location>
</feature>
<feature type="compositionally biased region" description="Low complexity" evidence="2">
    <location>
        <begin position="67"/>
        <end position="78"/>
    </location>
</feature>
<feature type="compositionally biased region" description="Acidic residues" evidence="2">
    <location>
        <begin position="216"/>
        <end position="227"/>
    </location>
</feature>
<feature type="compositionally biased region" description="Gly residues" evidence="2">
    <location>
        <begin position="233"/>
        <end position="242"/>
    </location>
</feature>
<feature type="compositionally biased region" description="Basic and acidic residues" evidence="2">
    <location>
        <begin position="574"/>
        <end position="588"/>
    </location>
</feature>
<feature type="compositionally biased region" description="Low complexity" evidence="2">
    <location>
        <begin position="626"/>
        <end position="635"/>
    </location>
</feature>
<feature type="compositionally biased region" description="Basic and acidic residues" evidence="2">
    <location>
        <begin position="636"/>
        <end position="655"/>
    </location>
</feature>
<feature type="compositionally biased region" description="Polar residues" evidence="2">
    <location>
        <begin position="932"/>
        <end position="949"/>
    </location>
</feature>
<feature type="compositionally biased region" description="Pro residues" evidence="2">
    <location>
        <begin position="951"/>
        <end position="965"/>
    </location>
</feature>
<feature type="compositionally biased region" description="Polar residues" evidence="2">
    <location>
        <begin position="966"/>
        <end position="978"/>
    </location>
</feature>
<feature type="splice variant" id="VSP_032981" description="In isoform 2." evidence="3">
    <location>
        <begin position="466"/>
        <end position="493"/>
    </location>
</feature>
<feature type="splice variant" id="VSP_032982" description="In isoform 2." evidence="3">
    <original>N</original>
    <variation>K</variation>
    <location>
        <position position="512"/>
    </location>
</feature>
<feature type="splice variant" id="VSP_032983" description="In isoform 2." evidence="3">
    <location>
        <begin position="513"/>
        <end position="1168"/>
    </location>
</feature>
<name>ZCHC2_RAT</name>
<comment type="alternative products">
    <event type="alternative splicing"/>
    <isoform>
        <id>Q498S6-1</id>
        <name>1</name>
        <sequence type="displayed"/>
    </isoform>
    <isoform>
        <id>Q498S6-2</id>
        <name>2</name>
        <name>Tnfrsf11a</name>
        <sequence type="described" ref="VSP_032981 VSP_032982 VSP_032983"/>
    </isoform>
</comment>
<comment type="sequence caution" evidence="4">
    <conflict type="erroneous initiation">
        <sequence resource="EMBL-CDS" id="AAI00091"/>
    </conflict>
</comment>
<proteinExistence type="evidence at transcript level"/>
<evidence type="ECO:0000255" key="1">
    <source>
        <dbReference type="PROSITE-ProRule" id="PRU00047"/>
    </source>
</evidence>
<evidence type="ECO:0000256" key="2">
    <source>
        <dbReference type="SAM" id="MobiDB-lite"/>
    </source>
</evidence>
<evidence type="ECO:0000303" key="3">
    <source>
    </source>
</evidence>
<evidence type="ECO:0000305" key="4"/>
<gene>
    <name type="primary">Zcchc2</name>
</gene>
<dbReference type="EMBL" id="AABR03084820">
    <property type="status" value="NOT_ANNOTATED_CDS"/>
    <property type="molecule type" value="Genomic_DNA"/>
</dbReference>
<dbReference type="EMBL" id="BC100090">
    <property type="protein sequence ID" value="AAI00091.1"/>
    <property type="status" value="ALT_INIT"/>
    <property type="molecule type" value="mRNA"/>
</dbReference>
<dbReference type="RefSeq" id="NP_001257971.1">
    <molecule id="Q498S6-2"/>
    <property type="nucleotide sequence ID" value="NM_001271042.1"/>
</dbReference>
<dbReference type="RefSeq" id="XP_006249687.1">
    <property type="nucleotide sequence ID" value="XM_006249625.3"/>
</dbReference>
<dbReference type="RefSeq" id="XP_006249688.1">
    <molecule id="Q498S6-1"/>
    <property type="nucleotide sequence ID" value="XM_006249626.5"/>
</dbReference>
<dbReference type="SMR" id="Q498S6"/>
<dbReference type="FunCoup" id="Q498S6">
    <property type="interactions" value="1120"/>
</dbReference>
<dbReference type="STRING" id="10116.ENSRNOP00000003870"/>
<dbReference type="GlyGen" id="Q498S6">
    <property type="glycosylation" value="1 site"/>
</dbReference>
<dbReference type="iPTMnet" id="Q498S6"/>
<dbReference type="PhosphoSitePlus" id="Q498S6"/>
<dbReference type="PaxDb" id="10116-ENSRNOP00000003870"/>
<dbReference type="GeneID" id="304695"/>
<dbReference type="KEGG" id="rno:304695"/>
<dbReference type="UCSC" id="RGD:1310626">
    <molecule id="Q498S6-1"/>
    <property type="organism name" value="rat"/>
</dbReference>
<dbReference type="AGR" id="RGD:1310626"/>
<dbReference type="CTD" id="54877"/>
<dbReference type="RGD" id="1310626">
    <property type="gene designation" value="Zcchc2"/>
</dbReference>
<dbReference type="VEuPathDB" id="HostDB:ENSRNOG00000002882"/>
<dbReference type="eggNOG" id="KOG3791">
    <property type="taxonomic scope" value="Eukaryota"/>
</dbReference>
<dbReference type="eggNOG" id="KOG4400">
    <property type="taxonomic scope" value="Eukaryota"/>
</dbReference>
<dbReference type="InParanoid" id="Q498S6"/>
<dbReference type="OrthoDB" id="6361509at2759"/>
<dbReference type="PhylomeDB" id="Q498S6"/>
<dbReference type="TreeFam" id="TF335574"/>
<dbReference type="PRO" id="PR:Q498S6"/>
<dbReference type="Proteomes" id="UP000002494">
    <property type="component" value="Chromosome 13"/>
</dbReference>
<dbReference type="Bgee" id="ENSRNOG00000002882">
    <property type="expression patterns" value="Expressed in testis and 18 other cell types or tissues"/>
</dbReference>
<dbReference type="ExpressionAtlas" id="Q498S6">
    <property type="expression patterns" value="baseline and differential"/>
</dbReference>
<dbReference type="GO" id="GO:0003676">
    <property type="term" value="F:nucleic acid binding"/>
    <property type="evidence" value="ECO:0007669"/>
    <property type="project" value="InterPro"/>
</dbReference>
<dbReference type="GO" id="GO:0035091">
    <property type="term" value="F:phosphatidylinositol binding"/>
    <property type="evidence" value="ECO:0007669"/>
    <property type="project" value="InterPro"/>
</dbReference>
<dbReference type="GO" id="GO:0008270">
    <property type="term" value="F:zinc ion binding"/>
    <property type="evidence" value="ECO:0007669"/>
    <property type="project" value="UniProtKB-KW"/>
</dbReference>
<dbReference type="FunFam" id="3.30.1520.10:FF:000045">
    <property type="entry name" value="Zinc finger CCHC domain-containing protein 2"/>
    <property type="match status" value="1"/>
</dbReference>
<dbReference type="Gene3D" id="3.30.1520.10">
    <property type="entry name" value="Phox-like domain"/>
    <property type="match status" value="1"/>
</dbReference>
<dbReference type="Gene3D" id="4.10.60.10">
    <property type="entry name" value="Zinc finger, CCHC-type"/>
    <property type="match status" value="1"/>
</dbReference>
<dbReference type="InterPro" id="IPR036871">
    <property type="entry name" value="PX_dom_sf"/>
</dbReference>
<dbReference type="InterPro" id="IPR042793">
    <property type="entry name" value="ZCCHC2"/>
</dbReference>
<dbReference type="InterPro" id="IPR001878">
    <property type="entry name" value="Znf_CCHC"/>
</dbReference>
<dbReference type="InterPro" id="IPR036875">
    <property type="entry name" value="Znf_CCHC_sf"/>
</dbReference>
<dbReference type="PANTHER" id="PTHR46939">
    <property type="entry name" value="ZINC FINGER CCHC DOMAIN-CONTAINING PROTEIN 2"/>
    <property type="match status" value="1"/>
</dbReference>
<dbReference type="PANTHER" id="PTHR46939:SF1">
    <property type="entry name" value="ZINC FINGER CCHC DOMAIN-CONTAINING PROTEIN 2"/>
    <property type="match status" value="1"/>
</dbReference>
<dbReference type="Pfam" id="PF25479">
    <property type="entry name" value="Vts1"/>
    <property type="match status" value="1"/>
</dbReference>
<dbReference type="Pfam" id="PF00098">
    <property type="entry name" value="zf-CCHC"/>
    <property type="match status" value="1"/>
</dbReference>
<dbReference type="SMART" id="SM00343">
    <property type="entry name" value="ZnF_C2HC"/>
    <property type="match status" value="1"/>
</dbReference>
<dbReference type="SUPFAM" id="SSF64268">
    <property type="entry name" value="PX domain"/>
    <property type="match status" value="1"/>
</dbReference>
<dbReference type="SUPFAM" id="SSF57756">
    <property type="entry name" value="Retrovirus zinc finger-like domains"/>
    <property type="match status" value="1"/>
</dbReference>
<dbReference type="PROSITE" id="PS50158">
    <property type="entry name" value="ZF_CCHC"/>
    <property type="match status" value="1"/>
</dbReference>
<organism>
    <name type="scientific">Rattus norvegicus</name>
    <name type="common">Rat</name>
    <dbReference type="NCBI Taxonomy" id="10116"/>
    <lineage>
        <taxon>Eukaryota</taxon>
        <taxon>Metazoa</taxon>
        <taxon>Chordata</taxon>
        <taxon>Craniata</taxon>
        <taxon>Vertebrata</taxon>
        <taxon>Euteleostomi</taxon>
        <taxon>Mammalia</taxon>
        <taxon>Eutheria</taxon>
        <taxon>Euarchontoglires</taxon>
        <taxon>Glires</taxon>
        <taxon>Rodentia</taxon>
        <taxon>Myomorpha</taxon>
        <taxon>Muroidea</taxon>
        <taxon>Muridae</taxon>
        <taxon>Murinae</taxon>
        <taxon>Rattus</taxon>
    </lineage>
</organism>
<accession>Q498S6</accession>
<reference key="1">
    <citation type="journal article" date="2004" name="Nature">
        <title>Genome sequence of the Brown Norway rat yields insights into mammalian evolution.</title>
        <authorList>
            <person name="Gibbs R.A."/>
            <person name="Weinstock G.M."/>
            <person name="Metzker M.L."/>
            <person name="Muzny D.M."/>
            <person name="Sodergren E.J."/>
            <person name="Scherer S."/>
            <person name="Scott G."/>
            <person name="Steffen D."/>
            <person name="Worley K.C."/>
            <person name="Burch P.E."/>
            <person name="Okwuonu G."/>
            <person name="Hines S."/>
            <person name="Lewis L."/>
            <person name="Deramo C."/>
            <person name="Delgado O."/>
            <person name="Dugan-Rocha S."/>
            <person name="Miner G."/>
            <person name="Morgan M."/>
            <person name="Hawes A."/>
            <person name="Gill R."/>
            <person name="Holt R.A."/>
            <person name="Adams M.D."/>
            <person name="Amanatides P.G."/>
            <person name="Baden-Tillson H."/>
            <person name="Barnstead M."/>
            <person name="Chin S."/>
            <person name="Evans C.A."/>
            <person name="Ferriera S."/>
            <person name="Fosler C."/>
            <person name="Glodek A."/>
            <person name="Gu Z."/>
            <person name="Jennings D."/>
            <person name="Kraft C.L."/>
            <person name="Nguyen T."/>
            <person name="Pfannkoch C.M."/>
            <person name="Sitter C."/>
            <person name="Sutton G.G."/>
            <person name="Venter J.C."/>
            <person name="Woodage T."/>
            <person name="Smith D."/>
            <person name="Lee H.-M."/>
            <person name="Gustafson E."/>
            <person name="Cahill P."/>
            <person name="Kana A."/>
            <person name="Doucette-Stamm L."/>
            <person name="Weinstock K."/>
            <person name="Fechtel K."/>
            <person name="Weiss R.B."/>
            <person name="Dunn D.M."/>
            <person name="Green E.D."/>
            <person name="Blakesley R.W."/>
            <person name="Bouffard G.G."/>
            <person name="De Jong P.J."/>
            <person name="Osoegawa K."/>
            <person name="Zhu B."/>
            <person name="Marra M."/>
            <person name="Schein J."/>
            <person name="Bosdet I."/>
            <person name="Fjell C."/>
            <person name="Jones S."/>
            <person name="Krzywinski M."/>
            <person name="Mathewson C."/>
            <person name="Siddiqui A."/>
            <person name="Wye N."/>
            <person name="McPherson J."/>
            <person name="Zhao S."/>
            <person name="Fraser C.M."/>
            <person name="Shetty J."/>
            <person name="Shatsman S."/>
            <person name="Geer K."/>
            <person name="Chen Y."/>
            <person name="Abramzon S."/>
            <person name="Nierman W.C."/>
            <person name="Havlak P.H."/>
            <person name="Chen R."/>
            <person name="Durbin K.J."/>
            <person name="Egan A."/>
            <person name="Ren Y."/>
            <person name="Song X.-Z."/>
            <person name="Li B."/>
            <person name="Liu Y."/>
            <person name="Qin X."/>
            <person name="Cawley S."/>
            <person name="Cooney A.J."/>
            <person name="D'Souza L.M."/>
            <person name="Martin K."/>
            <person name="Wu J.Q."/>
            <person name="Gonzalez-Garay M.L."/>
            <person name="Jackson A.R."/>
            <person name="Kalafus K.J."/>
            <person name="McLeod M.P."/>
            <person name="Milosavljevic A."/>
            <person name="Virk D."/>
            <person name="Volkov A."/>
            <person name="Wheeler D.A."/>
            <person name="Zhang Z."/>
            <person name="Bailey J.A."/>
            <person name="Eichler E.E."/>
            <person name="Tuzun E."/>
            <person name="Birney E."/>
            <person name="Mongin E."/>
            <person name="Ureta-Vidal A."/>
            <person name="Woodwark C."/>
            <person name="Zdobnov E."/>
            <person name="Bork P."/>
            <person name="Suyama M."/>
            <person name="Torrents D."/>
            <person name="Alexandersson M."/>
            <person name="Trask B.J."/>
            <person name="Young J.M."/>
            <person name="Huang H."/>
            <person name="Wang H."/>
            <person name="Xing H."/>
            <person name="Daniels S."/>
            <person name="Gietzen D."/>
            <person name="Schmidt J."/>
            <person name="Stevens K."/>
            <person name="Vitt U."/>
            <person name="Wingrove J."/>
            <person name="Camara F."/>
            <person name="Mar Alba M."/>
            <person name="Abril J.F."/>
            <person name="Guigo R."/>
            <person name="Smit A."/>
            <person name="Dubchak I."/>
            <person name="Rubin E.M."/>
            <person name="Couronne O."/>
            <person name="Poliakov A."/>
            <person name="Huebner N."/>
            <person name="Ganten D."/>
            <person name="Goesele C."/>
            <person name="Hummel O."/>
            <person name="Kreitler T."/>
            <person name="Lee Y.-A."/>
            <person name="Monti J."/>
            <person name="Schulz H."/>
            <person name="Zimdahl H."/>
            <person name="Himmelbauer H."/>
            <person name="Lehrach H."/>
            <person name="Jacob H.J."/>
            <person name="Bromberg S."/>
            <person name="Gullings-Handley J."/>
            <person name="Jensen-Seaman M.I."/>
            <person name="Kwitek A.E."/>
            <person name="Lazar J."/>
            <person name="Pasko D."/>
            <person name="Tonellato P.J."/>
            <person name="Twigger S."/>
            <person name="Ponting C.P."/>
            <person name="Duarte J.M."/>
            <person name="Rice S."/>
            <person name="Goodstadt L."/>
            <person name="Beatson S.A."/>
            <person name="Emes R.D."/>
            <person name="Winter E.E."/>
            <person name="Webber C."/>
            <person name="Brandt P."/>
            <person name="Nyakatura G."/>
            <person name="Adetobi M."/>
            <person name="Chiaromonte F."/>
            <person name="Elnitski L."/>
            <person name="Eswara P."/>
            <person name="Hardison R.C."/>
            <person name="Hou M."/>
            <person name="Kolbe D."/>
            <person name="Makova K."/>
            <person name="Miller W."/>
            <person name="Nekrutenko A."/>
            <person name="Riemer C."/>
            <person name="Schwartz S."/>
            <person name="Taylor J."/>
            <person name="Yang S."/>
            <person name="Zhang Y."/>
            <person name="Lindpaintner K."/>
            <person name="Andrews T.D."/>
            <person name="Caccamo M."/>
            <person name="Clamp M."/>
            <person name="Clarke L."/>
            <person name="Curwen V."/>
            <person name="Durbin R.M."/>
            <person name="Eyras E."/>
            <person name="Searle S.M."/>
            <person name="Cooper G.M."/>
            <person name="Batzoglou S."/>
            <person name="Brudno M."/>
            <person name="Sidow A."/>
            <person name="Stone E.A."/>
            <person name="Payseur B.A."/>
            <person name="Bourque G."/>
            <person name="Lopez-Otin C."/>
            <person name="Puente X.S."/>
            <person name="Chakrabarti K."/>
            <person name="Chatterji S."/>
            <person name="Dewey C."/>
            <person name="Pachter L."/>
            <person name="Bray N."/>
            <person name="Yap V.B."/>
            <person name="Caspi A."/>
            <person name="Tesler G."/>
            <person name="Pevzner P.A."/>
            <person name="Haussler D."/>
            <person name="Roskin K.M."/>
            <person name="Baertsch R."/>
            <person name="Clawson H."/>
            <person name="Furey T.S."/>
            <person name="Hinrichs A.S."/>
            <person name="Karolchik D."/>
            <person name="Kent W.J."/>
            <person name="Rosenbloom K.R."/>
            <person name="Trumbower H."/>
            <person name="Weirauch M."/>
            <person name="Cooper D.N."/>
            <person name="Stenson P.D."/>
            <person name="Ma B."/>
            <person name="Brent M."/>
            <person name="Arumugam M."/>
            <person name="Shteynberg D."/>
            <person name="Copley R.R."/>
            <person name="Taylor M.S."/>
            <person name="Riethman H."/>
            <person name="Mudunuri U."/>
            <person name="Peterson J."/>
            <person name="Guyer M."/>
            <person name="Felsenfeld A."/>
            <person name="Old S."/>
            <person name="Mockrin S."/>
            <person name="Collins F.S."/>
        </authorList>
    </citation>
    <scope>NUCLEOTIDE SEQUENCE [LARGE SCALE GENOMIC DNA]</scope>
    <source>
        <strain>Brown Norway</strain>
    </source>
</reference>
<reference key="2">
    <citation type="journal article" date="2004" name="Genome Res.">
        <title>The status, quality, and expansion of the NIH full-length cDNA project: the Mammalian Gene Collection (MGC).</title>
        <authorList>
            <consortium name="The MGC Project Team"/>
        </authorList>
    </citation>
    <scope>NUCLEOTIDE SEQUENCE [LARGE SCALE MRNA] OF 219-1168 (ISOFORM 2)</scope>
    <source>
        <tissue>Liver</tissue>
    </source>
</reference>